<reference key="1">
    <citation type="journal article" date="2000" name="Proc. Natl. Acad. Sci. U.S.A.">
        <title>Genome sequence of Halobacterium species NRC-1.</title>
        <authorList>
            <person name="Ng W.V."/>
            <person name="Kennedy S.P."/>
            <person name="Mahairas G.G."/>
            <person name="Berquist B."/>
            <person name="Pan M."/>
            <person name="Shukla H.D."/>
            <person name="Lasky S.R."/>
            <person name="Baliga N.S."/>
            <person name="Thorsson V."/>
            <person name="Sbrogna J."/>
            <person name="Swartzell S."/>
            <person name="Weir D."/>
            <person name="Hall J."/>
            <person name="Dahl T.A."/>
            <person name="Welti R."/>
            <person name="Goo Y.A."/>
            <person name="Leithauser B."/>
            <person name="Keller K."/>
            <person name="Cruz R."/>
            <person name="Danson M.J."/>
            <person name="Hough D.W."/>
            <person name="Maddocks D.G."/>
            <person name="Jablonski P.E."/>
            <person name="Krebs M.P."/>
            <person name="Angevine C.M."/>
            <person name="Dale H."/>
            <person name="Isenbarger T.A."/>
            <person name="Peck R.F."/>
            <person name="Pohlschroder M."/>
            <person name="Spudich J.L."/>
            <person name="Jung K.-H."/>
            <person name="Alam M."/>
            <person name="Freitas T."/>
            <person name="Hou S."/>
            <person name="Daniels C.J."/>
            <person name="Dennis P.P."/>
            <person name="Omer A.D."/>
            <person name="Ebhardt H."/>
            <person name="Lowe T.M."/>
            <person name="Liang P."/>
            <person name="Riley M."/>
            <person name="Hood L."/>
            <person name="DasSarma S."/>
        </authorList>
    </citation>
    <scope>NUCLEOTIDE SEQUENCE [LARGE SCALE GENOMIC DNA]</scope>
    <source>
        <strain>ATCC 700922 / JCM 11081 / NRC-1</strain>
    </source>
</reference>
<comment type="catalytic activity">
    <reaction>
        <text>chorismate + L-glutamine = anthranilate + pyruvate + L-glutamate + H(+)</text>
        <dbReference type="Rhea" id="RHEA:21732"/>
        <dbReference type="ChEBI" id="CHEBI:15361"/>
        <dbReference type="ChEBI" id="CHEBI:15378"/>
        <dbReference type="ChEBI" id="CHEBI:16567"/>
        <dbReference type="ChEBI" id="CHEBI:29748"/>
        <dbReference type="ChEBI" id="CHEBI:29985"/>
        <dbReference type="ChEBI" id="CHEBI:58359"/>
        <dbReference type="EC" id="4.1.3.27"/>
    </reaction>
</comment>
<comment type="cofactor">
    <cofactor evidence="2">
        <name>Mg(2+)</name>
        <dbReference type="ChEBI" id="CHEBI:18420"/>
    </cofactor>
    <text evidence="2">Binds 1 Mg(2+) ion per subunit.</text>
</comment>
<comment type="pathway">
    <text>Amino-acid biosynthesis; L-tryptophan biosynthesis; L-tryptophan from chorismate: step 1/5.</text>
</comment>
<comment type="subunit">
    <text evidence="1">Tetramer of two components I and two components II.</text>
</comment>
<comment type="miscellaneous">
    <text>Component I catalyzes the formation of anthranilate using ammonia rather than glutamine, whereas component II provides glutamine amidotransferase activity.</text>
</comment>
<comment type="similarity">
    <text evidence="4">Belongs to the anthranilate synthase component I family.</text>
</comment>
<evidence type="ECO:0000250" key="1"/>
<evidence type="ECO:0000250" key="2">
    <source>
        <dbReference type="UniProtKB" id="P00897"/>
    </source>
</evidence>
<evidence type="ECO:0000256" key="3">
    <source>
        <dbReference type="SAM" id="MobiDB-lite"/>
    </source>
</evidence>
<evidence type="ECO:0000305" key="4"/>
<accession>Q9HPG5</accession>
<proteinExistence type="inferred from homology"/>
<gene>
    <name type="primary">trpE1</name>
    <name type="ordered locus">VNG_1647G</name>
</gene>
<keyword id="KW-0028">Amino-acid biosynthesis</keyword>
<keyword id="KW-0057">Aromatic amino acid biosynthesis</keyword>
<keyword id="KW-0456">Lyase</keyword>
<keyword id="KW-0460">Magnesium</keyword>
<keyword id="KW-0479">Metal-binding</keyword>
<keyword id="KW-1185">Reference proteome</keyword>
<keyword id="KW-0822">Tryptophan biosynthesis</keyword>
<feature type="chain" id="PRO_0000154125" description="Anthranilate synthase component 1 1">
    <location>
        <begin position="1"/>
        <end position="527"/>
    </location>
</feature>
<feature type="region of interest" description="Disordered" evidence="3">
    <location>
        <begin position="53"/>
        <end position="72"/>
    </location>
</feature>
<feature type="binding site" evidence="2">
    <location>
        <position position="52"/>
    </location>
    <ligand>
        <name>L-tryptophan</name>
        <dbReference type="ChEBI" id="CHEBI:57912"/>
    </ligand>
</feature>
<feature type="binding site" evidence="2">
    <location>
        <begin position="298"/>
        <end position="300"/>
    </location>
    <ligand>
        <name>L-tryptophan</name>
        <dbReference type="ChEBI" id="CHEBI:57912"/>
    </ligand>
</feature>
<feature type="binding site" evidence="2">
    <location>
        <begin position="333"/>
        <end position="334"/>
    </location>
    <ligand>
        <name>chorismate</name>
        <dbReference type="ChEBI" id="CHEBI:29748"/>
    </ligand>
</feature>
<feature type="binding site" evidence="2">
    <location>
        <position position="360"/>
    </location>
    <ligand>
        <name>Mg(2+)</name>
        <dbReference type="ChEBI" id="CHEBI:18420"/>
    </ligand>
</feature>
<feature type="binding site" evidence="2">
    <location>
        <position position="448"/>
    </location>
    <ligand>
        <name>chorismate</name>
        <dbReference type="ChEBI" id="CHEBI:29748"/>
    </ligand>
</feature>
<feature type="binding site" evidence="2">
    <location>
        <position position="468"/>
    </location>
    <ligand>
        <name>chorismate</name>
        <dbReference type="ChEBI" id="CHEBI:29748"/>
    </ligand>
</feature>
<feature type="binding site" evidence="2">
    <location>
        <begin position="486"/>
        <end position="488"/>
    </location>
    <ligand>
        <name>chorismate</name>
        <dbReference type="ChEBI" id="CHEBI:29748"/>
    </ligand>
</feature>
<feature type="binding site" evidence="2">
    <location>
        <position position="488"/>
    </location>
    <ligand>
        <name>chorismate</name>
        <dbReference type="ChEBI" id="CHEBI:29748"/>
    </ligand>
</feature>
<feature type="binding site" evidence="2">
    <location>
        <position position="501"/>
    </location>
    <ligand>
        <name>Mg(2+)</name>
        <dbReference type="ChEBI" id="CHEBI:18420"/>
    </ligand>
</feature>
<protein>
    <recommendedName>
        <fullName>Anthranilate synthase component 1 1</fullName>
        <ecNumber>4.1.3.27</ecNumber>
    </recommendedName>
    <alternativeName>
        <fullName>Anthranilate synthase component I 1</fullName>
    </alternativeName>
</protein>
<name>TRPE1_HALSA</name>
<organism>
    <name type="scientific">Halobacterium salinarum (strain ATCC 700922 / JCM 11081 / NRC-1)</name>
    <name type="common">Halobacterium halobium</name>
    <dbReference type="NCBI Taxonomy" id="64091"/>
    <lineage>
        <taxon>Archaea</taxon>
        <taxon>Methanobacteriati</taxon>
        <taxon>Methanobacteriota</taxon>
        <taxon>Stenosarchaea group</taxon>
        <taxon>Halobacteria</taxon>
        <taxon>Halobacteriales</taxon>
        <taxon>Halobacteriaceae</taxon>
        <taxon>Halobacterium</taxon>
        <taxon>Halobacterium salinarum NRC-34001</taxon>
    </lineage>
</organism>
<sequence length="527" mass="56275">MIETDRETFTALADDGPAIVRVAADLDIDVAPLTAYDALVADADDHAFLLESAEKTPASDPDGAFTPDTTTEETRHARYSFVGYDPAAVVTVDPDDTTITRLRDDPITDLLDAPDHATGDVLDRLRSVMPAVPRRNIPTEDRQLLDGGLVGFLAYDAVYDLWLDEVGVERPPTPLPDAEFAVTTRTLVFDRATDSVSLVCTPVADADTATDVYDALEAEAKRVQAVLRDATAPATAGIEVTTERAGDRDAYTDAVETAATAVRDGEVYQAVVSRTRELDGDIDPRALYDALRAVNPSPYMFLLAHGDHTVVGASPETLVAVHDDTVVTNPIAGTCQRGASPVADRRLAGEMLADEKERAEHTMLVDLARNDVRRVSAPGTVSVPEFMRVLKYSHVQHIESTVTGTLAADADAFDATRAAFPAGTLSGAPKVRAMEHIDAIEATPRGIYGGGVGYFSWTGDAELAITIRSGTITHTGDEDTLTVRAGAGVVADSDPDAEYEETEAKMDGVLAAVDRLRTTDDGEAVHR</sequence>
<dbReference type="EC" id="4.1.3.27"/>
<dbReference type="EMBL" id="AE004437">
    <property type="protein sequence ID" value="AAG19902.1"/>
    <property type="molecule type" value="Genomic_DNA"/>
</dbReference>
<dbReference type="PIR" id="B84317">
    <property type="entry name" value="B84317"/>
</dbReference>
<dbReference type="SMR" id="Q9HPG5"/>
<dbReference type="FunCoup" id="Q9HPG5">
    <property type="interactions" value="106"/>
</dbReference>
<dbReference type="STRING" id="64091.VNG_1647G"/>
<dbReference type="PaxDb" id="64091-VNG_1647G"/>
<dbReference type="KEGG" id="hal:VNG_1647G"/>
<dbReference type="PATRIC" id="fig|64091.14.peg.1255"/>
<dbReference type="HOGENOM" id="CLU_006493_9_0_2"/>
<dbReference type="InParanoid" id="Q9HPG5"/>
<dbReference type="OrthoDB" id="25514at2157"/>
<dbReference type="PhylomeDB" id="Q9HPG5"/>
<dbReference type="UniPathway" id="UPA00035">
    <property type="reaction ID" value="UER00040"/>
</dbReference>
<dbReference type="Proteomes" id="UP000000554">
    <property type="component" value="Chromosome"/>
</dbReference>
<dbReference type="GO" id="GO:0004049">
    <property type="term" value="F:anthranilate synthase activity"/>
    <property type="evidence" value="ECO:0007669"/>
    <property type="project" value="UniProtKB-EC"/>
</dbReference>
<dbReference type="GO" id="GO:0046872">
    <property type="term" value="F:metal ion binding"/>
    <property type="evidence" value="ECO:0007669"/>
    <property type="project" value="UniProtKB-KW"/>
</dbReference>
<dbReference type="GO" id="GO:0000162">
    <property type="term" value="P:L-tryptophan biosynthetic process"/>
    <property type="evidence" value="ECO:0000318"/>
    <property type="project" value="GO_Central"/>
</dbReference>
<dbReference type="Gene3D" id="3.60.120.10">
    <property type="entry name" value="Anthranilate synthase"/>
    <property type="match status" value="1"/>
</dbReference>
<dbReference type="InterPro" id="IPR005801">
    <property type="entry name" value="ADC_synthase"/>
</dbReference>
<dbReference type="InterPro" id="IPR019999">
    <property type="entry name" value="Anth_synth_I-like"/>
</dbReference>
<dbReference type="InterPro" id="IPR006805">
    <property type="entry name" value="Anth_synth_I_N"/>
</dbReference>
<dbReference type="InterPro" id="IPR010116">
    <property type="entry name" value="Anthranilate_synth_I_arc_typ"/>
</dbReference>
<dbReference type="InterPro" id="IPR015890">
    <property type="entry name" value="Chorismate_C"/>
</dbReference>
<dbReference type="NCBIfam" id="TIGR01820">
    <property type="entry name" value="TrpE-arch"/>
    <property type="match status" value="1"/>
</dbReference>
<dbReference type="PANTHER" id="PTHR11236">
    <property type="entry name" value="AMINOBENZOATE/ANTHRANILATE SYNTHASE"/>
    <property type="match status" value="1"/>
</dbReference>
<dbReference type="PANTHER" id="PTHR11236:SF9">
    <property type="entry name" value="ANTHRANILATE SYNTHASE COMPONENT 1"/>
    <property type="match status" value="1"/>
</dbReference>
<dbReference type="Pfam" id="PF04715">
    <property type="entry name" value="Anth_synt_I_N"/>
    <property type="match status" value="1"/>
</dbReference>
<dbReference type="Pfam" id="PF00425">
    <property type="entry name" value="Chorismate_bind"/>
    <property type="match status" value="1"/>
</dbReference>
<dbReference type="PRINTS" id="PR00095">
    <property type="entry name" value="ANTSNTHASEI"/>
</dbReference>
<dbReference type="SUPFAM" id="SSF56322">
    <property type="entry name" value="ADC synthase"/>
    <property type="match status" value="1"/>
</dbReference>